<reference key="1">
    <citation type="submission" date="2007-06" db="EMBL/GenBank/DDBJ databases">
        <title>Complete sequence of Methanococcus maripaludis C7.</title>
        <authorList>
            <consortium name="US DOE Joint Genome Institute"/>
            <person name="Copeland A."/>
            <person name="Lucas S."/>
            <person name="Lapidus A."/>
            <person name="Barry K."/>
            <person name="Glavina del Rio T."/>
            <person name="Dalin E."/>
            <person name="Tice H."/>
            <person name="Pitluck S."/>
            <person name="Clum A."/>
            <person name="Schmutz J."/>
            <person name="Larimer F."/>
            <person name="Land M."/>
            <person name="Hauser L."/>
            <person name="Kyrpides N."/>
            <person name="Anderson I."/>
            <person name="Sieprawska-Lupa M."/>
            <person name="Whitman W.B."/>
            <person name="Richardson P."/>
        </authorList>
    </citation>
    <scope>NUCLEOTIDE SEQUENCE [LARGE SCALE GENOMIC DNA]</scope>
    <source>
        <strain>C7 / ATCC BAA-1331</strain>
    </source>
</reference>
<gene>
    <name evidence="1" type="primary">mtrB</name>
    <name type="ordered locus">MmarC7_0810</name>
</gene>
<organism>
    <name type="scientific">Methanococcus maripaludis (strain C7 / ATCC BAA-1331)</name>
    <dbReference type="NCBI Taxonomy" id="426368"/>
    <lineage>
        <taxon>Archaea</taxon>
        <taxon>Methanobacteriati</taxon>
        <taxon>Methanobacteriota</taxon>
        <taxon>Methanomada group</taxon>
        <taxon>Methanococci</taxon>
        <taxon>Methanococcales</taxon>
        <taxon>Methanococcaceae</taxon>
        <taxon>Methanococcus</taxon>
    </lineage>
</organism>
<accession>A6VHF1</accession>
<protein>
    <recommendedName>
        <fullName evidence="1">Tetrahydromethanopterin S-methyltransferase subunit B</fullName>
        <ecNumber evidence="1">7.2.1.4</ecNumber>
    </recommendedName>
    <alternativeName>
        <fullName evidence="1">N5-methyltetrahydromethanopterin--coenzyme M methyltransferase subunit B</fullName>
    </alternativeName>
</protein>
<proteinExistence type="inferred from homology"/>
<evidence type="ECO:0000255" key="1">
    <source>
        <dbReference type="HAMAP-Rule" id="MF_01094"/>
    </source>
</evidence>
<feature type="chain" id="PRO_1000064936" description="Tetrahydromethanopterin S-methyltransferase subunit B">
    <location>
        <begin position="1"/>
        <end position="108"/>
    </location>
</feature>
<feature type="transmembrane region" description="Helical" evidence="1">
    <location>
        <begin position="79"/>
        <end position="99"/>
    </location>
</feature>
<sequence length="108" mass="12070">MDIVKVCPELHIVMDVDSGLIAEMRKDILVVDLHPVEDEINKLAQYAKALENSLDPRNSPMKAYNGREGTYKLAGMFQGMFFGFWVTMAILVLVTILAVKMNLSLIGL</sequence>
<comment type="function">
    <text evidence="1">Part of a complex that catalyzes the formation of methyl-coenzyme M and tetrahydromethanopterin from coenzyme M and methyl-tetrahydromethanopterin. This is an energy-conserving, sodium-ion translocating step.</text>
</comment>
<comment type="catalytic activity">
    <reaction evidence="1">
        <text>5-methyl-5,6,7,8-tetrahydromethanopterin + coenzyme M + 2 Na(+)(in) = 5,6,7,8-tetrahydromethanopterin + methyl-coenzyme M + 2 Na(+)(out)</text>
        <dbReference type="Rhea" id="RHEA:53492"/>
        <dbReference type="ChEBI" id="CHEBI:29101"/>
        <dbReference type="ChEBI" id="CHEBI:58103"/>
        <dbReference type="ChEBI" id="CHEBI:58116"/>
        <dbReference type="ChEBI" id="CHEBI:58286"/>
        <dbReference type="ChEBI" id="CHEBI:58319"/>
        <dbReference type="EC" id="7.2.1.4"/>
    </reaction>
</comment>
<comment type="pathway">
    <text evidence="1">One-carbon metabolism; methanogenesis from CO(2); methyl-coenzyme M from 5,10-methylene-5,6,7,8-tetrahydromethanopterin: step 2/2.</text>
</comment>
<comment type="subunit">
    <text evidence="1">The complex is composed of 8 subunits; MtrA, MtrB, MtrC, MtrD, MtrE, MtrF, MtrG and MtrH.</text>
</comment>
<comment type="subcellular location">
    <subcellularLocation>
        <location evidence="1">Cell membrane</location>
        <topology evidence="1">Single-pass membrane protein</topology>
    </subcellularLocation>
</comment>
<comment type="similarity">
    <text evidence="1">Belongs to the MtrB family.</text>
</comment>
<name>MTRB_METM7</name>
<keyword id="KW-1003">Cell membrane</keyword>
<keyword id="KW-0472">Membrane</keyword>
<keyword id="KW-0484">Methanogenesis</keyword>
<keyword id="KW-0489">Methyltransferase</keyword>
<keyword id="KW-0554">One-carbon metabolism</keyword>
<keyword id="KW-0808">Transferase</keyword>
<keyword id="KW-1278">Translocase</keyword>
<keyword id="KW-0812">Transmembrane</keyword>
<keyword id="KW-1133">Transmembrane helix</keyword>
<dbReference type="EC" id="7.2.1.4" evidence="1"/>
<dbReference type="EMBL" id="CP000745">
    <property type="protein sequence ID" value="ABR65877.1"/>
    <property type="molecule type" value="Genomic_DNA"/>
</dbReference>
<dbReference type="SMR" id="A6VHF1"/>
<dbReference type="STRING" id="426368.MmarC7_0810"/>
<dbReference type="KEGG" id="mmz:MmarC7_0810"/>
<dbReference type="eggNOG" id="arCOG04867">
    <property type="taxonomic scope" value="Archaea"/>
</dbReference>
<dbReference type="HOGENOM" id="CLU_171544_0_0_2"/>
<dbReference type="OrthoDB" id="114034at2157"/>
<dbReference type="UniPathway" id="UPA00640">
    <property type="reaction ID" value="UER00698"/>
</dbReference>
<dbReference type="GO" id="GO:0005886">
    <property type="term" value="C:plasma membrane"/>
    <property type="evidence" value="ECO:0007669"/>
    <property type="project" value="UniProtKB-SubCell"/>
</dbReference>
<dbReference type="GO" id="GO:0030269">
    <property type="term" value="F:tetrahydromethanopterin S-methyltransferase activity"/>
    <property type="evidence" value="ECO:0007669"/>
    <property type="project" value="UniProtKB-UniRule"/>
</dbReference>
<dbReference type="GO" id="GO:0019386">
    <property type="term" value="P:methanogenesis, from carbon dioxide"/>
    <property type="evidence" value="ECO:0007669"/>
    <property type="project" value="UniProtKB-UniRule"/>
</dbReference>
<dbReference type="GO" id="GO:0032259">
    <property type="term" value="P:methylation"/>
    <property type="evidence" value="ECO:0007669"/>
    <property type="project" value="UniProtKB-KW"/>
</dbReference>
<dbReference type="GO" id="GO:0006730">
    <property type="term" value="P:one-carbon metabolic process"/>
    <property type="evidence" value="ECO:0007669"/>
    <property type="project" value="UniProtKB-UniRule"/>
</dbReference>
<dbReference type="HAMAP" id="MF_01094">
    <property type="entry name" value="MtrB"/>
    <property type="match status" value="1"/>
</dbReference>
<dbReference type="InterPro" id="IPR008690">
    <property type="entry name" value="MtrB_MeTrfase"/>
</dbReference>
<dbReference type="NCBIfam" id="TIGR04166">
    <property type="entry name" value="methano_MtrB"/>
    <property type="match status" value="1"/>
</dbReference>
<dbReference type="NCBIfam" id="NF002129">
    <property type="entry name" value="PRK00965.1"/>
    <property type="match status" value="1"/>
</dbReference>
<dbReference type="Pfam" id="PF05440">
    <property type="entry name" value="MtrB"/>
    <property type="match status" value="1"/>
</dbReference>
<dbReference type="PIRSF" id="PIRSF005518">
    <property type="entry name" value="MtrB"/>
    <property type="match status" value="1"/>
</dbReference>